<gene>
    <name evidence="1" type="primary">nikB</name>
    <name type="synonym">oppB2</name>
    <name type="ordered locus">SAV1382</name>
</gene>
<keyword id="KW-1003">Cell membrane</keyword>
<keyword id="KW-0406">Ion transport</keyword>
<keyword id="KW-0472">Membrane</keyword>
<keyword id="KW-0533">Nickel</keyword>
<keyword id="KW-0921">Nickel transport</keyword>
<keyword id="KW-0812">Transmembrane</keyword>
<keyword id="KW-1133">Transmembrane helix</keyword>
<keyword id="KW-0813">Transport</keyword>
<feature type="chain" id="PRO_0000276778" description="Nickel import system permease protein NikB">
    <location>
        <begin position="1"/>
        <end position="328"/>
    </location>
</feature>
<feature type="transmembrane region" description="Helical" evidence="2">
    <location>
        <begin position="11"/>
        <end position="31"/>
    </location>
</feature>
<feature type="transmembrane region" description="Helical" evidence="2">
    <location>
        <begin position="104"/>
        <end position="124"/>
    </location>
</feature>
<feature type="transmembrane region" description="Helical" evidence="2">
    <location>
        <begin position="139"/>
        <end position="159"/>
    </location>
</feature>
<feature type="transmembrane region" description="Helical" evidence="2">
    <location>
        <begin position="170"/>
        <end position="190"/>
    </location>
</feature>
<feature type="transmembrane region" description="Helical" evidence="2">
    <location>
        <begin position="229"/>
        <end position="249"/>
    </location>
</feature>
<feature type="transmembrane region" description="Helical" evidence="2">
    <location>
        <begin position="279"/>
        <end position="299"/>
    </location>
</feature>
<feature type="domain" description="ABC transmembrane type-1" evidence="2">
    <location>
        <begin position="100"/>
        <end position="297"/>
    </location>
</feature>
<dbReference type="EMBL" id="BA000017">
    <property type="protein sequence ID" value="BAB57544.1"/>
    <property type="molecule type" value="Genomic_DNA"/>
</dbReference>
<dbReference type="RefSeq" id="WP_000469951.1">
    <property type="nucleotide sequence ID" value="NC_002758.2"/>
</dbReference>
<dbReference type="SMR" id="Q99UA0"/>
<dbReference type="KEGG" id="sav:SAV1382"/>
<dbReference type="HOGENOM" id="CLU_036879_0_2_9"/>
<dbReference type="PhylomeDB" id="Q99UA0"/>
<dbReference type="Proteomes" id="UP000002481">
    <property type="component" value="Chromosome"/>
</dbReference>
<dbReference type="GO" id="GO:0005886">
    <property type="term" value="C:plasma membrane"/>
    <property type="evidence" value="ECO:0007669"/>
    <property type="project" value="UniProtKB-SubCell"/>
</dbReference>
<dbReference type="GO" id="GO:0015099">
    <property type="term" value="F:nickel cation transmembrane transporter activity"/>
    <property type="evidence" value="ECO:0007669"/>
    <property type="project" value="InterPro"/>
</dbReference>
<dbReference type="CDD" id="cd06261">
    <property type="entry name" value="TM_PBP2"/>
    <property type="match status" value="1"/>
</dbReference>
<dbReference type="Gene3D" id="1.10.3720.10">
    <property type="entry name" value="MetI-like"/>
    <property type="match status" value="1"/>
</dbReference>
<dbReference type="InterPro" id="IPR045621">
    <property type="entry name" value="BPD_transp_1_N"/>
</dbReference>
<dbReference type="InterPro" id="IPR000515">
    <property type="entry name" value="MetI-like"/>
</dbReference>
<dbReference type="InterPro" id="IPR035906">
    <property type="entry name" value="MetI-like_sf"/>
</dbReference>
<dbReference type="InterPro" id="IPR050045">
    <property type="entry name" value="Opp2B"/>
</dbReference>
<dbReference type="NCBIfam" id="NF045470">
    <property type="entry name" value="Opp2B"/>
    <property type="match status" value="1"/>
</dbReference>
<dbReference type="PANTHER" id="PTHR43163">
    <property type="entry name" value="DIPEPTIDE TRANSPORT SYSTEM PERMEASE PROTEIN DPPB-RELATED"/>
    <property type="match status" value="1"/>
</dbReference>
<dbReference type="PANTHER" id="PTHR43163:SF6">
    <property type="entry name" value="DIPEPTIDE TRANSPORT SYSTEM PERMEASE PROTEIN DPPB-RELATED"/>
    <property type="match status" value="1"/>
</dbReference>
<dbReference type="Pfam" id="PF00528">
    <property type="entry name" value="BPD_transp_1"/>
    <property type="match status" value="1"/>
</dbReference>
<dbReference type="Pfam" id="PF19300">
    <property type="entry name" value="BPD_transp_1_N"/>
    <property type="match status" value="1"/>
</dbReference>
<dbReference type="SUPFAM" id="SSF161098">
    <property type="entry name" value="MetI-like"/>
    <property type="match status" value="1"/>
</dbReference>
<dbReference type="PROSITE" id="PS50928">
    <property type="entry name" value="ABC_TM1"/>
    <property type="match status" value="1"/>
</dbReference>
<proteinExistence type="inferred from homology"/>
<evidence type="ECO:0000250" key="1">
    <source>
        <dbReference type="UniProtKB" id="Q2FYQ5"/>
    </source>
</evidence>
<evidence type="ECO:0000255" key="2">
    <source>
        <dbReference type="PROSITE-ProRule" id="PRU00441"/>
    </source>
</evidence>
<evidence type="ECO:0000305" key="3"/>
<protein>
    <recommendedName>
        <fullName evidence="1">Nickel import system permease protein NikB</fullName>
    </recommendedName>
</protein>
<accession>Q99UA0</accession>
<organism>
    <name type="scientific">Staphylococcus aureus (strain Mu50 / ATCC 700699)</name>
    <dbReference type="NCBI Taxonomy" id="158878"/>
    <lineage>
        <taxon>Bacteria</taxon>
        <taxon>Bacillati</taxon>
        <taxon>Bacillota</taxon>
        <taxon>Bacilli</taxon>
        <taxon>Bacillales</taxon>
        <taxon>Staphylococcaceae</taxon>
        <taxon>Staphylococcus</taxon>
    </lineage>
</organism>
<comment type="function">
    <text evidence="1">Part of the ABC transporter complex NikABCDE (Opp2) involved in nickel import. Probably responsible for the translocation of the substrate across the membrane.</text>
</comment>
<comment type="subunit">
    <text evidence="1">The complex is composed of two ATP-binding proteins (NikD and NikE), two transmembrane proteins (NikB and NikC) and a solute-binding protein (NikA).</text>
</comment>
<comment type="subcellular location">
    <subcellularLocation>
        <location evidence="3">Cell membrane</location>
        <topology evidence="2">Multi-pass membrane protein</topology>
    </subcellularLocation>
</comment>
<comment type="similarity">
    <text evidence="3">Belongs to the binding-protein-dependent transport system permease family. OppBC subfamily.</text>
</comment>
<name>NIKB_STAAM</name>
<sequence>MFIIKSMLYRLMQMIVVLFVISTLTFILMKLSPGNPVDKILHLDVAQVSTEQINATKDKLGLNDSLLVQWWHWMNHLLHFNLGKSFESKEPVTQILFNYAPITLLISFSTLVVSLCISIPLGIIAAKRFHKWTDKVIRVISTLSISLPAFFIGIILLFIVTNLMNIDSVILSQFILPVITLSLGMCAYIIRLVRSNLLMLLQSNIVQASRLRGMNERYILIHDLLKPTILPIIPLLGISLGSLIGGTVVIENLFDIPGIGYLLMDSIKSRDYPVIQGCVLFIGFFVVIINTIADLLTLLLDPKQRLQLGNPKNKTNTPLISESSDRHA</sequence>
<reference key="1">
    <citation type="journal article" date="2001" name="Lancet">
        <title>Whole genome sequencing of meticillin-resistant Staphylococcus aureus.</title>
        <authorList>
            <person name="Kuroda M."/>
            <person name="Ohta T."/>
            <person name="Uchiyama I."/>
            <person name="Baba T."/>
            <person name="Yuzawa H."/>
            <person name="Kobayashi I."/>
            <person name="Cui L."/>
            <person name="Oguchi A."/>
            <person name="Aoki K."/>
            <person name="Nagai Y."/>
            <person name="Lian J.-Q."/>
            <person name="Ito T."/>
            <person name="Kanamori M."/>
            <person name="Matsumaru H."/>
            <person name="Maruyama A."/>
            <person name="Murakami H."/>
            <person name="Hosoyama A."/>
            <person name="Mizutani-Ui Y."/>
            <person name="Takahashi N.K."/>
            <person name="Sawano T."/>
            <person name="Inoue R."/>
            <person name="Kaito C."/>
            <person name="Sekimizu K."/>
            <person name="Hirakawa H."/>
            <person name="Kuhara S."/>
            <person name="Goto S."/>
            <person name="Yabuzaki J."/>
            <person name="Kanehisa M."/>
            <person name="Yamashita A."/>
            <person name="Oshima K."/>
            <person name="Furuya K."/>
            <person name="Yoshino C."/>
            <person name="Shiba T."/>
            <person name="Hattori M."/>
            <person name="Ogasawara N."/>
            <person name="Hayashi H."/>
            <person name="Hiramatsu K."/>
        </authorList>
    </citation>
    <scope>NUCLEOTIDE SEQUENCE [LARGE SCALE GENOMIC DNA]</scope>
    <source>
        <strain>Mu50 / ATCC 700699</strain>
    </source>
</reference>